<keyword id="KW-1003">Cell membrane</keyword>
<keyword id="KW-0204">Cytolysis</keyword>
<keyword id="KW-0472">Membrane</keyword>
<keyword id="KW-0812">Transmembrane</keyword>
<keyword id="KW-1133">Transmembrane helix</keyword>
<comment type="function">
    <text evidence="1">Increases the activity of extracellular murein hydrolases possibly by mediating their export via hole formation. Inhibited by the antiholin-like proteins LrgAB. In an unstressed cell, the LrgAB products probably inhibit the function of the CidA protein. When a cell is stressed by the addition of antibiotics or by other factors in the environment, CidA possibly oligomerizes within the bacterial cell membrane, creating lesions that disrupt the proton motive force, which in turn results in loss of cell viability. These lesions are also hypothesized to regulate the subsequent cell lysis by either allowing the murein hydrolases access to the cell wall substrate and/or regulating their activity by a possible change in the cell wall pH that results from loss of membrane potential.</text>
</comment>
<comment type="subcellular location">
    <subcellularLocation>
        <location evidence="1">Cell membrane</location>
        <topology evidence="1">Multi-pass membrane protein</topology>
    </subcellularLocation>
</comment>
<comment type="similarity">
    <text evidence="1">Belongs to the CidA/LrgA family. CidA subfamily.</text>
</comment>
<dbReference type="EMBL" id="CP000764">
    <property type="protein sequence ID" value="ABS22567.1"/>
    <property type="molecule type" value="Genomic_DNA"/>
</dbReference>
<dbReference type="RefSeq" id="WP_012094763.1">
    <property type="nucleotide sequence ID" value="NC_009674.1"/>
</dbReference>
<dbReference type="SMR" id="A7GR09"/>
<dbReference type="STRING" id="315749.Bcer98_2321"/>
<dbReference type="GeneID" id="33897592"/>
<dbReference type="KEGG" id="bcy:Bcer98_2321"/>
<dbReference type="eggNOG" id="COG1380">
    <property type="taxonomic scope" value="Bacteria"/>
</dbReference>
<dbReference type="HOGENOM" id="CLU_113736_3_2_9"/>
<dbReference type="OrthoDB" id="3176438at2"/>
<dbReference type="Proteomes" id="UP000002300">
    <property type="component" value="Chromosome"/>
</dbReference>
<dbReference type="GO" id="GO:0005886">
    <property type="term" value="C:plasma membrane"/>
    <property type="evidence" value="ECO:0007669"/>
    <property type="project" value="UniProtKB-SubCell"/>
</dbReference>
<dbReference type="GO" id="GO:0019835">
    <property type="term" value="P:cytolysis"/>
    <property type="evidence" value="ECO:0007669"/>
    <property type="project" value="UniProtKB-UniRule"/>
</dbReference>
<dbReference type="GO" id="GO:0031640">
    <property type="term" value="P:killing of cells of another organism"/>
    <property type="evidence" value="ECO:0007669"/>
    <property type="project" value="UniProtKB-KW"/>
</dbReference>
<dbReference type="GO" id="GO:0012501">
    <property type="term" value="P:programmed cell death"/>
    <property type="evidence" value="ECO:0007669"/>
    <property type="project" value="UniProtKB-UniRule"/>
</dbReference>
<dbReference type="HAMAP" id="MF_01143">
    <property type="entry name" value="CidA"/>
    <property type="match status" value="1"/>
</dbReference>
<dbReference type="InterPro" id="IPR023760">
    <property type="entry name" value="Holin-like_CidA"/>
</dbReference>
<dbReference type="InterPro" id="IPR005538">
    <property type="entry name" value="LrgA/CidA"/>
</dbReference>
<dbReference type="NCBIfam" id="NF002460">
    <property type="entry name" value="PRK01658.1"/>
    <property type="match status" value="1"/>
</dbReference>
<dbReference type="PANTHER" id="PTHR33931:SF2">
    <property type="entry name" value="HOLIN-LIKE PROTEIN CIDA"/>
    <property type="match status" value="1"/>
</dbReference>
<dbReference type="PANTHER" id="PTHR33931">
    <property type="entry name" value="HOLIN-LIKE PROTEIN CIDA-RELATED"/>
    <property type="match status" value="1"/>
</dbReference>
<dbReference type="Pfam" id="PF03788">
    <property type="entry name" value="LrgA"/>
    <property type="match status" value="1"/>
</dbReference>
<name>CIDA_BACCN</name>
<gene>
    <name evidence="1" type="primary">cidA</name>
    <name type="ordered locus">Bcer98_2321</name>
</gene>
<reference key="1">
    <citation type="journal article" date="2008" name="Chem. Biol. Interact.">
        <title>Extending the Bacillus cereus group genomics to putative food-borne pathogens of different toxicity.</title>
        <authorList>
            <person name="Lapidus A."/>
            <person name="Goltsman E."/>
            <person name="Auger S."/>
            <person name="Galleron N."/>
            <person name="Segurens B."/>
            <person name="Dossat C."/>
            <person name="Land M.L."/>
            <person name="Broussolle V."/>
            <person name="Brillard J."/>
            <person name="Guinebretiere M.-H."/>
            <person name="Sanchis V."/>
            <person name="Nguen-the C."/>
            <person name="Lereclus D."/>
            <person name="Richardson P."/>
            <person name="Wincker P."/>
            <person name="Weissenbach J."/>
            <person name="Ehrlich S.D."/>
            <person name="Sorokin A."/>
        </authorList>
    </citation>
    <scope>NUCLEOTIDE SEQUENCE [LARGE SCALE GENOMIC DNA]</scope>
    <source>
        <strain>DSM 22905 / CIP 110041 / 391-98 / NVH 391-98</strain>
    </source>
</reference>
<sequence length="121" mass="13811">MKWWKLSGQILLLFCFAWTGEWIAKQVHLPIPGSIIGIFLLLISLKFNLVKKEWIQDGADFLLKELILFFIPSAVAVIRYKDTLSQYGIDLIFIIMISTLCVTLVTGILTELLLKRKGSVQ</sequence>
<protein>
    <recommendedName>
        <fullName evidence="1">Holin-like protein CidA</fullName>
    </recommendedName>
</protein>
<evidence type="ECO:0000255" key="1">
    <source>
        <dbReference type="HAMAP-Rule" id="MF_01143"/>
    </source>
</evidence>
<accession>A7GR09</accession>
<organism>
    <name type="scientific">Bacillus cytotoxicus (strain DSM 22905 / CIP 110041 / 391-98 / NVH 391-98)</name>
    <dbReference type="NCBI Taxonomy" id="315749"/>
    <lineage>
        <taxon>Bacteria</taxon>
        <taxon>Bacillati</taxon>
        <taxon>Bacillota</taxon>
        <taxon>Bacilli</taxon>
        <taxon>Bacillales</taxon>
        <taxon>Bacillaceae</taxon>
        <taxon>Bacillus</taxon>
        <taxon>Bacillus cereus group</taxon>
    </lineage>
</organism>
<proteinExistence type="inferred from homology"/>
<feature type="chain" id="PRO_1000085036" description="Holin-like protein CidA">
    <location>
        <begin position="1"/>
        <end position="121"/>
    </location>
</feature>
<feature type="transmembrane region" description="Helical" evidence="1">
    <location>
        <begin position="27"/>
        <end position="47"/>
    </location>
</feature>
<feature type="transmembrane region" description="Helical" evidence="1">
    <location>
        <begin position="58"/>
        <end position="78"/>
    </location>
</feature>
<feature type="transmembrane region" description="Helical" evidence="1">
    <location>
        <begin position="89"/>
        <end position="109"/>
    </location>
</feature>